<name>SNX1_ARATH</name>
<gene>
    <name type="primary">SNX1</name>
    <name type="synonym">VPS5</name>
    <name type="ordered locus">At5g06140</name>
    <name type="ORF">K16F4.11</name>
    <name type="ORF">MBL20</name>
</gene>
<evidence type="ECO:0000250" key="1"/>
<evidence type="ECO:0000255" key="2">
    <source>
        <dbReference type="PROSITE-ProRule" id="PRU00147"/>
    </source>
</evidence>
<evidence type="ECO:0000256" key="3">
    <source>
        <dbReference type="SAM" id="MobiDB-lite"/>
    </source>
</evidence>
<evidence type="ECO:0000269" key="4">
    <source>
    </source>
</evidence>
<evidence type="ECO:0000269" key="5">
    <source>
    </source>
</evidence>
<evidence type="ECO:0000269" key="6">
    <source>
    </source>
</evidence>
<evidence type="ECO:0000269" key="7">
    <source>
    </source>
</evidence>
<evidence type="ECO:0000269" key="8">
    <source>
    </source>
</evidence>
<evidence type="ECO:0000305" key="9"/>
<evidence type="ECO:0007744" key="10">
    <source>
    </source>
</evidence>
<feature type="chain" id="PRO_0000414719" description="Sorting nexin 1">
    <location>
        <begin position="1"/>
        <end position="402"/>
    </location>
</feature>
<feature type="domain" description="PX" evidence="2">
    <location>
        <begin position="24"/>
        <end position="143"/>
    </location>
</feature>
<feature type="domain" description="BAR">
    <location>
        <begin position="160"/>
        <end position="402"/>
    </location>
</feature>
<feature type="region of interest" description="Disordered" evidence="3">
    <location>
        <begin position="1"/>
        <end position="25"/>
    </location>
</feature>
<feature type="compositionally biased region" description="Polar residues" evidence="3">
    <location>
        <begin position="1"/>
        <end position="10"/>
    </location>
</feature>
<feature type="compositionally biased region" description="Low complexity" evidence="3">
    <location>
        <begin position="11"/>
        <end position="24"/>
    </location>
</feature>
<feature type="binding site" evidence="1">
    <location>
        <position position="67"/>
    </location>
    <ligand>
        <name>a 1,2-diacyl-sn-glycero-3-phospho-(1D-myo-inositol-3-phosphate)</name>
        <dbReference type="ChEBI" id="CHEBI:58088"/>
    </ligand>
</feature>
<feature type="binding site" evidence="1">
    <location>
        <position position="93"/>
    </location>
    <ligand>
        <name>a 1,2-diacyl-sn-glycero-3-phospho-(1D-myo-inositol-3-phosphate)</name>
        <dbReference type="ChEBI" id="CHEBI:58088"/>
    </ligand>
</feature>
<feature type="binding site" evidence="1">
    <location>
        <position position="109"/>
    </location>
    <ligand>
        <name>a 1,2-diacyl-sn-glycero-3-phospho-(1D-myo-inositol-3-phosphate)</name>
        <dbReference type="ChEBI" id="CHEBI:58088"/>
    </ligand>
</feature>
<feature type="modified residue" description="Phosphoserine" evidence="10">
    <location>
        <position position="16"/>
    </location>
</feature>
<proteinExistence type="evidence at protein level"/>
<organism>
    <name type="scientific">Arabidopsis thaliana</name>
    <name type="common">Mouse-ear cress</name>
    <dbReference type="NCBI Taxonomy" id="3702"/>
    <lineage>
        <taxon>Eukaryota</taxon>
        <taxon>Viridiplantae</taxon>
        <taxon>Streptophyta</taxon>
        <taxon>Embryophyta</taxon>
        <taxon>Tracheophyta</taxon>
        <taxon>Spermatophyta</taxon>
        <taxon>Magnoliopsida</taxon>
        <taxon>eudicotyledons</taxon>
        <taxon>Gunneridae</taxon>
        <taxon>Pentapetalae</taxon>
        <taxon>rosids</taxon>
        <taxon>malvids</taxon>
        <taxon>Brassicales</taxon>
        <taxon>Brassicaceae</taxon>
        <taxon>Camelineae</taxon>
        <taxon>Arabidopsis</taxon>
    </lineage>
</organism>
<comment type="function">
    <text evidence="4 5 6 7 8">Plays a role in vesicular protein sorting. Acts at the crossroads between the secretory and endocytic pathways. Is involved in the endosome to vacuole protein transport via its interaction with the BLOS1/2 proteins and, as component of the membrane-associated retromer complex, is also involved in endosome-to-Golgi retrograde transport. Required for the auxin-carrier protein PIN2 sorting to the lytic vacuolar pathway and the trafficking of several plasma membrane proteins. Also involved in the efficient sorting of seed storage protein globulin 12S.</text>
</comment>
<comment type="subunit">
    <text evidence="7 8">Homodimer. Heterodimer with SNX2A or SNX2B. Component of the retromer complex which consists of VPS29 (MAG1), VPS26 (VPS26A or VPS26B), VPS35 (VPS35A or VPS35B or VPS35C), VPS5/17 (SNX1 or SNX2A or SNX2B). Interacts with BLOS1 and BLOS2.</text>
</comment>
<comment type="interaction">
    <interactant intactId="EBI-1543026">
        <id>Q9FG38</id>
    </interactant>
    <interactant intactId="EBI-4406998">
        <id>O22929</id>
        <label>BLOS1</label>
    </interactant>
    <organismsDiffer>false</organismsDiffer>
    <experiments>5</experiments>
</comment>
<comment type="interaction">
    <interactant intactId="EBI-1543026">
        <id>Q9FG38</id>
    </interactant>
    <interactant intactId="EBI-5258249">
        <id>Q8L5Z7</id>
        <label>SNX2A</label>
    </interactant>
    <organismsDiffer>false</organismsDiffer>
    <experiments>6</experiments>
</comment>
<comment type="interaction">
    <interactant intactId="EBI-1543026">
        <id>Q9FG38</id>
    </interactant>
    <interactant intactId="EBI-5258273">
        <id>B9DFS6</id>
        <label>SNX2B</label>
    </interactant>
    <organismsDiffer>false</organismsDiffer>
    <experiments>7</experiments>
</comment>
<comment type="subcellular location">
    <subcellularLocation>
        <location>Cytoplasm</location>
    </subcellularLocation>
    <subcellularLocation>
        <location>Endosome membrane</location>
        <topology>Peripheral membrane protein</topology>
        <orientation>Cytoplasmic side</orientation>
    </subcellularLocation>
    <subcellularLocation>
        <location>Prevacuolar compartment membrane</location>
        <topology>Peripheral membrane protein</topology>
        <orientation>Cytoplasmic side</orientation>
    </subcellularLocation>
    <subcellularLocation>
        <location>Golgi apparatus</location>
        <location>trans-Golgi network membrane</location>
        <topology>Peripheral membrane protein</topology>
        <orientation>Cytoplasmic side</orientation>
    </subcellularLocation>
</comment>
<comment type="tissue specificity">
    <text evidence="8">Ubiquitously expressed.</text>
</comment>
<comment type="domain">
    <text>The PX domain binds phosphatidylinositol 3-phosphate which is necessary for peripheral membrane localization.</text>
</comment>
<comment type="disruption phenotype">
    <text evidence="4">Shorter primary roots, fewer secondary roots and an altered root gravitropic response. Accumulation of storage protein globulin 12S in dry seeds.</text>
</comment>
<comment type="similarity">
    <text evidence="9">Belongs to the sorting nexin family.</text>
</comment>
<dbReference type="EMBL" id="AP002030">
    <property type="protein sequence ID" value="BAB10207.1"/>
    <property type="molecule type" value="Genomic_DNA"/>
</dbReference>
<dbReference type="EMBL" id="AP002544">
    <property type="protein sequence ID" value="BAB10207.1"/>
    <property type="status" value="JOINED"/>
    <property type="molecule type" value="Genomic_DNA"/>
</dbReference>
<dbReference type="EMBL" id="CP002688">
    <property type="protein sequence ID" value="AED90975.1"/>
    <property type="molecule type" value="Genomic_DNA"/>
</dbReference>
<dbReference type="EMBL" id="BT029777">
    <property type="protein sequence ID" value="ABM06047.1"/>
    <property type="molecule type" value="mRNA"/>
</dbReference>
<dbReference type="EMBL" id="AY080809">
    <property type="protein sequence ID" value="AAL87289.1"/>
    <property type="molecule type" value="mRNA"/>
</dbReference>
<dbReference type="RefSeq" id="NP_196232.1">
    <property type="nucleotide sequence ID" value="NM_120696.4"/>
</dbReference>
<dbReference type="SMR" id="Q9FG38"/>
<dbReference type="BioGRID" id="15780">
    <property type="interactions" value="4"/>
</dbReference>
<dbReference type="FunCoup" id="Q9FG38">
    <property type="interactions" value="5121"/>
</dbReference>
<dbReference type="IntAct" id="Q9FG38">
    <property type="interactions" value="7"/>
</dbReference>
<dbReference type="STRING" id="3702.Q9FG38"/>
<dbReference type="iPTMnet" id="Q9FG38"/>
<dbReference type="PaxDb" id="3702-AT5G06140.1"/>
<dbReference type="ProteomicsDB" id="234477"/>
<dbReference type="EnsemblPlants" id="AT5G06140.1">
    <property type="protein sequence ID" value="AT5G06140.1"/>
    <property type="gene ID" value="AT5G06140"/>
</dbReference>
<dbReference type="GeneID" id="830501"/>
<dbReference type="Gramene" id="AT5G06140.1">
    <property type="protein sequence ID" value="AT5G06140.1"/>
    <property type="gene ID" value="AT5G06140"/>
</dbReference>
<dbReference type="KEGG" id="ath:AT5G06140"/>
<dbReference type="Araport" id="AT5G06140"/>
<dbReference type="TAIR" id="AT5G06140">
    <property type="gene designation" value="SNX1"/>
</dbReference>
<dbReference type="eggNOG" id="KOG2273">
    <property type="taxonomic scope" value="Eukaryota"/>
</dbReference>
<dbReference type="HOGENOM" id="CLU_022783_1_0_1"/>
<dbReference type="InParanoid" id="Q9FG38"/>
<dbReference type="OMA" id="LWETFLM"/>
<dbReference type="OrthoDB" id="5227681at2759"/>
<dbReference type="PhylomeDB" id="Q9FG38"/>
<dbReference type="PRO" id="PR:Q9FG38"/>
<dbReference type="Proteomes" id="UP000006548">
    <property type="component" value="Chromosome 5"/>
</dbReference>
<dbReference type="ExpressionAtlas" id="Q9FG38">
    <property type="expression patterns" value="baseline and differential"/>
</dbReference>
<dbReference type="GO" id="GO:0005768">
    <property type="term" value="C:endosome"/>
    <property type="evidence" value="ECO:0000314"/>
    <property type="project" value="TAIR"/>
</dbReference>
<dbReference type="GO" id="GO:0010008">
    <property type="term" value="C:endosome membrane"/>
    <property type="evidence" value="ECO:0007669"/>
    <property type="project" value="UniProtKB-SubCell"/>
</dbReference>
<dbReference type="GO" id="GO:0005794">
    <property type="term" value="C:Golgi apparatus"/>
    <property type="evidence" value="ECO:0007669"/>
    <property type="project" value="UniProtKB-SubCell"/>
</dbReference>
<dbReference type="GO" id="GO:0043231">
    <property type="term" value="C:intracellular membrane-bounded organelle"/>
    <property type="evidence" value="ECO:0000314"/>
    <property type="project" value="TAIR"/>
</dbReference>
<dbReference type="GO" id="GO:0016020">
    <property type="term" value="C:membrane"/>
    <property type="evidence" value="ECO:0000314"/>
    <property type="project" value="TAIR"/>
</dbReference>
<dbReference type="GO" id="GO:0005771">
    <property type="term" value="C:multivesicular body"/>
    <property type="evidence" value="ECO:0000314"/>
    <property type="project" value="TAIR"/>
</dbReference>
<dbReference type="GO" id="GO:0005886">
    <property type="term" value="C:plasma membrane"/>
    <property type="evidence" value="ECO:0007005"/>
    <property type="project" value="TAIR"/>
</dbReference>
<dbReference type="GO" id="GO:0030904">
    <property type="term" value="C:retromer complex"/>
    <property type="evidence" value="ECO:0000314"/>
    <property type="project" value="TAIR"/>
</dbReference>
<dbReference type="GO" id="GO:0035091">
    <property type="term" value="F:phosphatidylinositol binding"/>
    <property type="evidence" value="ECO:0007669"/>
    <property type="project" value="InterPro"/>
</dbReference>
<dbReference type="GO" id="GO:0008333">
    <property type="term" value="P:endosome to lysosome transport"/>
    <property type="evidence" value="ECO:0000304"/>
    <property type="project" value="TAIR"/>
</dbReference>
<dbReference type="GO" id="GO:0006896">
    <property type="term" value="P:Golgi to vacuole transport"/>
    <property type="evidence" value="ECO:0000314"/>
    <property type="project" value="TAIR"/>
</dbReference>
<dbReference type="GO" id="GO:0009958">
    <property type="term" value="P:positive gravitropism"/>
    <property type="evidence" value="ECO:0000315"/>
    <property type="project" value="TAIR"/>
</dbReference>
<dbReference type="GO" id="GO:0006623">
    <property type="term" value="P:protein targeting to vacuole"/>
    <property type="evidence" value="ECO:0000315"/>
    <property type="project" value="TAIR"/>
</dbReference>
<dbReference type="GO" id="GO:0048364">
    <property type="term" value="P:root development"/>
    <property type="evidence" value="ECO:0000315"/>
    <property type="project" value="TAIR"/>
</dbReference>
<dbReference type="CDD" id="cd07596">
    <property type="entry name" value="BAR_SNX"/>
    <property type="match status" value="1"/>
</dbReference>
<dbReference type="CDD" id="cd06859">
    <property type="entry name" value="PX_SNX1_2_like"/>
    <property type="match status" value="1"/>
</dbReference>
<dbReference type="FunFam" id="1.20.1270.60:FF:000044">
    <property type="entry name" value="Sorting nexin 1"/>
    <property type="match status" value="1"/>
</dbReference>
<dbReference type="FunFam" id="3.30.1520.10:FF:000028">
    <property type="entry name" value="sorting nexin 1 isoform X2"/>
    <property type="match status" value="1"/>
</dbReference>
<dbReference type="Gene3D" id="1.20.1270.60">
    <property type="entry name" value="Arfaptin homology (AH) domain/BAR domain"/>
    <property type="match status" value="1"/>
</dbReference>
<dbReference type="Gene3D" id="3.30.1520.10">
    <property type="entry name" value="Phox-like domain"/>
    <property type="match status" value="1"/>
</dbReference>
<dbReference type="InterPro" id="IPR027267">
    <property type="entry name" value="AH/BAR_dom_sf"/>
</dbReference>
<dbReference type="InterPro" id="IPR001683">
    <property type="entry name" value="PX_dom"/>
</dbReference>
<dbReference type="InterPro" id="IPR036871">
    <property type="entry name" value="PX_dom_sf"/>
</dbReference>
<dbReference type="InterPro" id="IPR015404">
    <property type="entry name" value="Vps5_C"/>
</dbReference>
<dbReference type="PANTHER" id="PTHR10555:SF170">
    <property type="entry name" value="FI18122P1"/>
    <property type="match status" value="1"/>
</dbReference>
<dbReference type="PANTHER" id="PTHR10555">
    <property type="entry name" value="SORTING NEXIN"/>
    <property type="match status" value="1"/>
</dbReference>
<dbReference type="Pfam" id="PF00787">
    <property type="entry name" value="PX"/>
    <property type="match status" value="1"/>
</dbReference>
<dbReference type="Pfam" id="PF09325">
    <property type="entry name" value="Vps5"/>
    <property type="match status" value="1"/>
</dbReference>
<dbReference type="SMART" id="SM00312">
    <property type="entry name" value="PX"/>
    <property type="match status" value="1"/>
</dbReference>
<dbReference type="SUPFAM" id="SSF103657">
    <property type="entry name" value="BAR/IMD domain-like"/>
    <property type="match status" value="1"/>
</dbReference>
<dbReference type="SUPFAM" id="SSF64268">
    <property type="entry name" value="PX domain"/>
    <property type="match status" value="1"/>
</dbReference>
<dbReference type="PROSITE" id="PS50195">
    <property type="entry name" value="PX"/>
    <property type="match status" value="1"/>
</dbReference>
<reference key="1">
    <citation type="submission" date="2000-05" db="EMBL/GenBank/DDBJ databases">
        <title>Structural analysis of Arabidopsis thaliana chromosome 5. XI.</title>
        <authorList>
            <person name="Kaneko T."/>
            <person name="Katoh T."/>
            <person name="Asamizu E."/>
            <person name="Sato S."/>
            <person name="Nakamura Y."/>
            <person name="Kotani H."/>
            <person name="Tabata S."/>
        </authorList>
    </citation>
    <scope>NUCLEOTIDE SEQUENCE [LARGE SCALE GENOMIC DNA]</scope>
    <source>
        <strain>cv. Columbia</strain>
    </source>
</reference>
<reference key="2">
    <citation type="journal article" date="2017" name="Plant J.">
        <title>Araport11: a complete reannotation of the Arabidopsis thaliana reference genome.</title>
        <authorList>
            <person name="Cheng C.Y."/>
            <person name="Krishnakumar V."/>
            <person name="Chan A.P."/>
            <person name="Thibaud-Nissen F."/>
            <person name="Schobel S."/>
            <person name="Town C.D."/>
        </authorList>
    </citation>
    <scope>GENOME REANNOTATION</scope>
    <source>
        <strain>cv. Columbia</strain>
    </source>
</reference>
<reference key="3">
    <citation type="submission" date="2006-12" db="EMBL/GenBank/DDBJ databases">
        <title>Arabidopsis ORF clones.</title>
        <authorList>
            <person name="Bautista V.R."/>
            <person name="Kim C.J."/>
            <person name="Chen H."/>
            <person name="Wu S.Y."/>
            <person name="De Los Reyes C."/>
            <person name="Ecker J.R."/>
        </authorList>
    </citation>
    <scope>NUCLEOTIDE SEQUENCE [LARGE SCALE MRNA]</scope>
    <source>
        <strain>cv. Columbia</strain>
    </source>
</reference>
<reference key="4">
    <citation type="journal article" date="2003" name="Science">
        <title>Empirical analysis of transcriptional activity in the Arabidopsis genome.</title>
        <authorList>
            <person name="Yamada K."/>
            <person name="Lim J."/>
            <person name="Dale J.M."/>
            <person name="Chen H."/>
            <person name="Shinn P."/>
            <person name="Palm C.J."/>
            <person name="Southwick A.M."/>
            <person name="Wu H.C."/>
            <person name="Kim C.J."/>
            <person name="Nguyen M."/>
            <person name="Pham P.K."/>
            <person name="Cheuk R.F."/>
            <person name="Karlin-Newmann G."/>
            <person name="Liu S.X."/>
            <person name="Lam B."/>
            <person name="Sakano H."/>
            <person name="Wu T."/>
            <person name="Yu G."/>
            <person name="Miranda M."/>
            <person name="Quach H.L."/>
            <person name="Tripp M."/>
            <person name="Chang C.H."/>
            <person name="Lee J.M."/>
            <person name="Toriumi M.J."/>
            <person name="Chan M.M."/>
            <person name="Tang C.C."/>
            <person name="Onodera C.S."/>
            <person name="Deng J.M."/>
            <person name="Akiyama K."/>
            <person name="Ansari Y."/>
            <person name="Arakawa T."/>
            <person name="Banh J."/>
            <person name="Banno F."/>
            <person name="Bowser L."/>
            <person name="Brooks S.Y."/>
            <person name="Carninci P."/>
            <person name="Chao Q."/>
            <person name="Choy N."/>
            <person name="Enju A."/>
            <person name="Goldsmith A.D."/>
            <person name="Gurjal M."/>
            <person name="Hansen N.F."/>
            <person name="Hayashizaki Y."/>
            <person name="Johnson-Hopson C."/>
            <person name="Hsuan V.W."/>
            <person name="Iida K."/>
            <person name="Karnes M."/>
            <person name="Khan S."/>
            <person name="Koesema E."/>
            <person name="Ishida J."/>
            <person name="Jiang P.X."/>
            <person name="Jones T."/>
            <person name="Kawai J."/>
            <person name="Kamiya A."/>
            <person name="Meyers C."/>
            <person name="Nakajima M."/>
            <person name="Narusaka M."/>
            <person name="Seki M."/>
            <person name="Sakurai T."/>
            <person name="Satou M."/>
            <person name="Tamse R."/>
            <person name="Vaysberg M."/>
            <person name="Wallender E.K."/>
            <person name="Wong C."/>
            <person name="Yamamura Y."/>
            <person name="Yuan S."/>
            <person name="Shinozaki K."/>
            <person name="Davis R.W."/>
            <person name="Theologis A."/>
            <person name="Ecker J.R."/>
        </authorList>
    </citation>
    <scope>NUCLEOTIDE SEQUENCE [LARGE SCALE MRNA] OF 170-402</scope>
    <source>
        <strain>cv. Columbia</strain>
    </source>
</reference>
<reference key="5">
    <citation type="journal article" date="2003" name="Plant Physiol.">
        <title>Interaction of calmodulin, a sorting nexin and kinase-associated protein phosphatase with the Brassica oleracea S locus receptor kinase.</title>
        <authorList>
            <person name="Vanoosthuyse V."/>
            <person name="Tichtinsky G."/>
            <person name="Dumas C."/>
            <person name="Gaude T."/>
            <person name="Cock J.M."/>
        </authorList>
    </citation>
    <scope>IDENTIFICATION</scope>
</reference>
<reference key="6">
    <citation type="journal article" date="2006" name="Nature">
        <title>AtSNX1 defines an endosome for auxin-carrier trafficking in Arabidopsis.</title>
        <authorList>
            <person name="Jaillais Y."/>
            <person name="Fobis-Loisy I."/>
            <person name="Miege C."/>
            <person name="Rollin C."/>
            <person name="Gaude T."/>
        </authorList>
    </citation>
    <scope>FUNCTION</scope>
    <scope>DISRUPTION PHENOTYPE</scope>
    <scope>SUBCELLULAR LOCATION</scope>
</reference>
<reference key="7">
    <citation type="journal article" date="2006" name="Plant Cell">
        <title>Plant retromer, localized to the prevacuolar compartment and microvesicles in Arabidopsis, may interact with vacuolar sorting receptors.</title>
        <authorList>
            <person name="Oliviusson P."/>
            <person name="Heinzerling O."/>
            <person name="Hillmer S."/>
            <person name="Hinz G."/>
            <person name="Tse Y.C."/>
            <person name="Jiang L."/>
            <person name="Robinson D.G."/>
        </authorList>
    </citation>
    <scope>COMPONENT OF THE RETROMER COMPLEX</scope>
</reference>
<reference key="8">
    <citation type="journal article" date="2008" name="Plant J.">
        <title>Evidence for a sorting endosome in Arabidopsis root cells.</title>
        <authorList>
            <person name="Jaillais Y."/>
            <person name="Fobis-Loisy I."/>
            <person name="Miege C."/>
            <person name="Gaude T."/>
        </authorList>
    </citation>
    <scope>FUNCTION</scope>
    <scope>SUBCELLULAR LOCATION</scope>
</reference>
<reference key="9">
    <citation type="journal article" date="2008" name="Proc. Natl. Acad. Sci. U.S.A.">
        <title>Differential degradation of PIN2 auxin efflux carrier by retromer-dependent vacuolar targeting.</title>
        <authorList>
            <person name="Kleine-Vehn J."/>
            <person name="Leitner J."/>
            <person name="Zwiewka M."/>
            <person name="Sauer M."/>
            <person name="Abas L."/>
            <person name="Luschnig C."/>
            <person name="Friml J."/>
        </authorList>
    </citation>
    <scope>FUNCTION</scope>
</reference>
<reference key="10">
    <citation type="journal article" date="2009" name="Plant Physiol.">
        <title>Large-scale Arabidopsis phosphoproteome profiling reveals novel chloroplast kinase substrates and phosphorylation networks.</title>
        <authorList>
            <person name="Reiland S."/>
            <person name="Messerli G."/>
            <person name="Baerenfaller K."/>
            <person name="Gerrits B."/>
            <person name="Endler A."/>
            <person name="Grossmann J."/>
            <person name="Gruissem W."/>
            <person name="Baginsky S."/>
        </authorList>
    </citation>
    <scope>PHOSPHORYLATION [LARGE SCALE ANALYSIS] AT SER-16</scope>
    <scope>IDENTIFICATION BY MASS SPECTROMETRY [LARGE SCALE ANALYSIS]</scope>
</reference>
<reference key="11">
    <citation type="journal article" date="2010" name="J. Cell Sci.">
        <title>BLOS1, a putative BLOC-1 subunit, interacts with SNX1 and modulates root growth in Arabidopsis.</title>
        <authorList>
            <person name="Cui Y."/>
            <person name="Li X."/>
            <person name="Chen Q."/>
            <person name="He X."/>
            <person name="Yang Q."/>
            <person name="Zhang A."/>
            <person name="Yu X."/>
            <person name="Chen H."/>
            <person name="Liu N."/>
            <person name="Xie Q."/>
            <person name="Yang W."/>
            <person name="Zuo J."/>
            <person name="Palme K."/>
            <person name="Li W."/>
        </authorList>
    </citation>
    <scope>FUNCTION</scope>
    <scope>INTERACTION WITH BLOS1 AND BLOS2</scope>
</reference>
<reference key="12">
    <citation type="journal article" date="2010" name="Plant Cell">
        <title>Analyses of sorting nexins reveal distinct retromer-subcomplex functions in development and protein sorting in Arabidopsis thaliana.</title>
        <authorList>
            <person name="Pourcher M."/>
            <person name="Santambrogio M."/>
            <person name="Thazar N."/>
            <person name="Thierry A.M."/>
            <person name="Fobis-Loisy I."/>
            <person name="Miege C."/>
            <person name="Jaillais Y."/>
            <person name="Gaude T."/>
        </authorList>
    </citation>
    <scope>FUNCTION</scope>
    <scope>TISSUE SPECIFICITY</scope>
    <scope>SUBCELLULAR LOCATION</scope>
    <scope>SUBUNIT</scope>
</reference>
<reference key="13">
    <citation type="journal article" date="2010" name="Plant J.">
        <title>Retromer recycles vacuolar sorting receptors from the trans-Golgi network.</title>
        <authorList>
            <person name="Niemes S."/>
            <person name="Langhans M."/>
            <person name="Viotti C."/>
            <person name="Scheuring D."/>
            <person name="San Wan Yan M."/>
            <person name="Jiang L."/>
            <person name="Hillmer S."/>
            <person name="Robinson D.G."/>
            <person name="Pimpl P."/>
        </authorList>
    </citation>
    <scope>SUBCELLULAR LOCATION</scope>
</reference>
<accession>Q9FG38</accession>
<accession>Q8RXM2</accession>
<protein>
    <recommendedName>
        <fullName>Sorting nexin 1</fullName>
        <shortName>AtSNX1</shortName>
    </recommendedName>
    <alternativeName>
        <fullName>Vacuolar protein sorting-associated protein 5 homolog</fullName>
    </alternativeName>
</protein>
<sequence>MESTEQPRNISGSMQSPRSPSSHPYLSVSVTDPVKLGNGVQAYISYRVITKTNLPEYQGPEKIVIRRYSDFVWLRDRLFEKYKGIFIPPLPEKSAVEKFRFSAEFIEMRRAALDIFVNRIALHPELQQSEDLRTFLQADEETMDRFRFQETSIFKKPADLMQMFRDVQSKVSDAVLGKEKPVEETTADYEKLKHYIFELENHLTEAQKHAYRLVKRHRELGQSLLDFGKAVKLLGACEGEPTGKAFSDLGTKSELLSIKLQKEAQQVLMNFEEPLKDYVRYVQSIKATIAERGTAFKQHCELSETTKLKEINLDKLMLTRSDKVGEAEIEYREIKAESEEATRRFERIVKRMEDEIVRFQEQKTEEMGVAFHQFAKGQARLANSVADAWRSLLPKLEASYSV</sequence>
<keyword id="KW-0963">Cytoplasm</keyword>
<keyword id="KW-0967">Endosome</keyword>
<keyword id="KW-0333">Golgi apparatus</keyword>
<keyword id="KW-0446">Lipid-binding</keyword>
<keyword id="KW-0472">Membrane</keyword>
<keyword id="KW-0597">Phosphoprotein</keyword>
<keyword id="KW-0653">Protein transport</keyword>
<keyword id="KW-1185">Reference proteome</keyword>
<keyword id="KW-0813">Transport</keyword>